<gene>
    <name type="primary">UL48</name>
</gene>
<evidence type="ECO:0000255" key="1">
    <source>
        <dbReference type="HAMAP-Rule" id="MF_04044"/>
    </source>
</evidence>
<evidence type="ECO:0000256" key="2">
    <source>
        <dbReference type="SAM" id="MobiDB-lite"/>
    </source>
</evidence>
<organismHost>
    <name type="scientific">Homo sapiens</name>
    <name type="common">Human</name>
    <dbReference type="NCBI Taxonomy" id="9606"/>
</organismHost>
<dbReference type="EC" id="3.4.19.12" evidence="1"/>
<dbReference type="EC" id="3.4.22.-" evidence="1"/>
<dbReference type="EMBL" id="AY446894">
    <property type="protein sequence ID" value="AAR31613.1"/>
    <property type="molecule type" value="Genomic_DNA"/>
</dbReference>
<dbReference type="RefSeq" id="YP_081506.1">
    <property type="nucleotide sequence ID" value="NC_006273.2"/>
</dbReference>
<dbReference type="SMR" id="Q6SW84"/>
<dbReference type="BioGRID" id="1678057">
    <property type="interactions" value="8"/>
</dbReference>
<dbReference type="DNASU" id="3077504"/>
<dbReference type="GeneID" id="3077504"/>
<dbReference type="KEGG" id="vg:3077504"/>
<dbReference type="Reactome" id="R-HSA-9609690">
    <property type="pathway name" value="HCMV Early Events"/>
</dbReference>
<dbReference type="Reactome" id="R-HSA-9610379">
    <property type="pathway name" value="HCMV Late Events"/>
</dbReference>
<dbReference type="Proteomes" id="UP000000938">
    <property type="component" value="Segment"/>
</dbReference>
<dbReference type="GO" id="GO:0042025">
    <property type="term" value="C:host cell nucleus"/>
    <property type="evidence" value="ECO:0007669"/>
    <property type="project" value="UniProtKB-SubCell"/>
</dbReference>
<dbReference type="GO" id="GO:0072517">
    <property type="term" value="C:host cell viral assembly compartment"/>
    <property type="evidence" value="ECO:0000304"/>
    <property type="project" value="Reactome"/>
</dbReference>
<dbReference type="GO" id="GO:0019033">
    <property type="term" value="C:viral tegument"/>
    <property type="evidence" value="ECO:0000304"/>
    <property type="project" value="Reactome"/>
</dbReference>
<dbReference type="GO" id="GO:0004843">
    <property type="term" value="F:cysteine-type deubiquitinase activity"/>
    <property type="evidence" value="ECO:0007669"/>
    <property type="project" value="UniProtKB-EC"/>
</dbReference>
<dbReference type="GO" id="GO:0006508">
    <property type="term" value="P:proteolysis"/>
    <property type="evidence" value="ECO:0007669"/>
    <property type="project" value="UniProtKB-KW"/>
</dbReference>
<dbReference type="GO" id="GO:0039648">
    <property type="term" value="P:symbiont-mediated perturbation of host ubiquitin-like protein modification"/>
    <property type="evidence" value="ECO:0007669"/>
    <property type="project" value="UniProtKB-KW"/>
</dbReference>
<dbReference type="Gene3D" id="3.90.70.120">
    <property type="match status" value="1"/>
</dbReference>
<dbReference type="HAMAP" id="MF_04044">
    <property type="entry name" value="HSV_LTP"/>
    <property type="match status" value="1"/>
</dbReference>
<dbReference type="InterPro" id="IPR006928">
    <property type="entry name" value="Herpes_teg_USP"/>
</dbReference>
<dbReference type="InterPro" id="IPR034702">
    <property type="entry name" value="HSV_LTP"/>
</dbReference>
<dbReference type="InterPro" id="IPR038765">
    <property type="entry name" value="Papain-like_cys_pep_sf"/>
</dbReference>
<dbReference type="Pfam" id="PF04843">
    <property type="entry name" value="Herpes_teg_N"/>
    <property type="match status" value="1"/>
</dbReference>
<dbReference type="SUPFAM" id="SSF54001">
    <property type="entry name" value="Cysteine proteinases"/>
    <property type="match status" value="1"/>
</dbReference>
<dbReference type="PROSITE" id="PS51521">
    <property type="entry name" value="HTUSP"/>
    <property type="match status" value="1"/>
</dbReference>
<keyword id="KW-1035">Host cytoplasm</keyword>
<keyword id="KW-1048">Host nucleus</keyword>
<keyword id="KW-0945">Host-virus interaction</keyword>
<keyword id="KW-0378">Hydrolase</keyword>
<keyword id="KW-1127">Modulation of host ubiquitin pathway by viral deubiquitinase</keyword>
<keyword id="KW-1130">Modulation of host ubiquitin pathway by virus</keyword>
<keyword id="KW-0645">Protease</keyword>
<keyword id="KW-1185">Reference proteome</keyword>
<keyword id="KW-0677">Repeat</keyword>
<keyword id="KW-0788">Thiol protease</keyword>
<keyword id="KW-0833">Ubl conjugation pathway</keyword>
<keyword id="KW-0946">Virion</keyword>
<keyword id="KW-0920">Virion tegument</keyword>
<sequence length="2241" mass="253174">MKVTQASCHQGDIARFGARAGNQCVCNGIMFLHALHLGGTSAVLQTEALDAIMEEGARLDARLERELQKKLPAGGRLPVYRLGDEVPRRLESRFGRTVHALSRPFNGTTETCDLDGYMCPGIFDFLRYAHAKPRPTYVLVTVNSLARAVVFTEDHMLVFDPHSSAECHNAAVYHCEGLHQVLMVLTGFGVQLSPAFYYEALFLYMLDVATVPEAEIAARLVSTYRDRDIDLTGVVRESADTAATTTTAAPSLPPLPDPIVDPGCPPGVAPSIPVYDPSSSPKKTPEKRRKDLSGSKHGGKKKPPSTTSKTLATASSSPSAIAAASSSSAVPPSYSCGEGALPALGRYQQLVDEVEQELKALTLPPLPANTSAWTLHAAGTESGANAATATAPSFDEAFLTDRLQQLIIHAVNQRSCLRRPCGPQSAAQQAVRAYLGLSKKLDAFLLNWLHHGLDLQRMHDYLSHKTTKGTYSTLDRALLEKMQVVFDPYGRQHGPALIAWVEEMLRYVESKPTNELSQRLQRFVTKRPMPVSDSFVCLRPVDFQRLTQVIEQRRRVLQRQREEYHGVYEHLAGLITSIDIHDLDASDLNRREILKALQPLDDNAKQELFRLGNAKMLELQMDLDRLSTQLLTRVHNHILNGFLPVEDLKQMERVVEQVLRLFYDLRDLKLCDGSYEEGFVVIREQLSYLMTGTVRDNVPLLQEILQLRHAYQQATQQNEGRLTQIHDLLHVIETLVRDPGSRGSALTLALVQEQLAQLEALGGLQLPEVQQRLQNAQLALSRLYEEEEETQRFLDGLSYDDPPTEQTIKRHPQLREMLRRDEQTRLRLINAVLSMFHTLVMRLARDESPRPTFFDAVSLLLQQLPPDSHEREDLRAANATYAQMVKKLEQIEKAGTGASEKRFQALRELVYFFRNHEYFFQHMVGRLGVGPQVTELYERYQHEMEEQHLERLEREWQEEAGKLTVTSVEDVQRVLARAPSHRVMHQMQQTLTTKMQDFLDKEKRKQEEQQRQLLDGYQKKVQQDLQRVVDAVKGEMLSTIPHQPLEATLELLLGLDQRAQPLLDKFNQDLLSALQQLSKKLDGRINECLHGVLTGDVERRCHPHREAAMQTQASLNHLDQILGPQLLIHETQQALQHAVHQAQFIEKCQQGDPTTAITGSEFESDFARYRSSQQKMEGQLQETRQQMTETSERLDRSLRQDPGSSSVTRVPEKPFKGQELAGRITPPPADFQRPVFKTLLDQQADAARKALSDEADLLNQKVQTQLRQRDEQLSTAQNLWTDLVTRHKMSGGLDVTTPDAKALMEKPLETLRELLGKATQQLPYLSAERTVRWMLAFLEEALAQITADPTHPHHGSRTHYRNLQQQAVESAVTLAHQIEQNAACENFIAQHQEATANGASTPRVDMVQAVEAVWQRLEPGRVAGGAARHQKVQELLQRLGQTLGDLELQETLATEYFALLHGIQTFSYGLDFRSQLEKIRDLRTRFAELAKRCGTRLSNEGALPNPRKPQATTSLGAFTRGLNALERHVQLGHQYLLNKLNGSSLVYRLEDIPSVLPPTHETDPALIMRDRLRRLCFARHHDTFLEVVDVFGMRQIVTQAGEPIYLVTDYGNVAFKYLALRDDGRPLAWRRRCSGGGLKNVVTTRYKAITVAVAVCQTLRTFWPQISQYDLRPYLTQHQSHTHPAETHTLHNLKLFCYLVSTAWHQRIDTQQELTAADRVGSGEGGDVGEQRPGRGTVLRLSLQEFCVLIAALYPEYIYTVLKYPVQMSLPSLTAHLHQDVIHAVVNNTHKMPPDHLPEQVKAFCITPTQWPAMQLNKLFWENKLVQQLCQVGPQKSTPSLGKLWLYAMATLVFPQDMLQCLWLELKPQYAETYASVSELVQTLFQIFTQQCEMVTEGYTQPQLPTGEPVLQMIRVRRQDTTTTDTNTTTEPGLLDVFIQTETALDYALGSWLFGIPVCLGVHVADLLKGQRVLVARHLEYTSRDRDFLRIQRSRDLNLSQLLQDTWTETPLEHCWLQAQIRRLRDYLRFPTRLEFIPLVIYNAQDHTVVRVLRPPSTFEQDHSRLVLDEAFPTFPLYDQDDNTSADNVAASGAAPTPPVPFNRVPVNIQFLRENPPPIARVQQPPRRHRHRAAAAADDDGQIDHAQDDTSRTADSALVSTAFGGSVFQENRLGETPLCRDELVAVAPGAASTSFASPPITVLTQNVLSALEILRLVRLDLRQLAQSVQDTIQHMRFLYLL</sequence>
<reference key="1">
    <citation type="journal article" date="2004" name="J. Gen. Virol.">
        <title>Genetic content of wild-type human cytomegalovirus.</title>
        <authorList>
            <person name="Dolan A."/>
            <person name="Cunningham C."/>
            <person name="Hector R.D."/>
            <person name="Hassan-Walker A.F."/>
            <person name="Lee L."/>
            <person name="Addison C."/>
            <person name="Dargan D.J."/>
            <person name="McGeoch D.J."/>
            <person name="Gatherer D."/>
            <person name="Emery V.C."/>
            <person name="Griffiths P.D."/>
            <person name="Sinzger C."/>
            <person name="McSharry B.P."/>
            <person name="Wilkinson G.W.G."/>
            <person name="Davison A.J."/>
        </authorList>
    </citation>
    <scope>NUCLEOTIDE SEQUENCE [LARGE SCALE GENOMIC DNA]</scope>
</reference>
<proteinExistence type="inferred from homology"/>
<comment type="function">
    <text evidence="1">Large tegument protein that plays multiple roles in the viral cycle. During viral entry, remains associated with the capsid while most of the tegument is detached and participates in the capsid transport toward the host nucleus. Plays a role in the routing of the capsid at the nuclear pore complex and subsequent uncoating. Within the host nucleus, acts as a deneddylase and promotes the degradation of nuclear CRLs (cullin-RING ubiquitin ligases) and thereby stabilizes nuclear CRL substrates, while cytoplasmic CRLs remain unaffected. These modifications prevent host cell cycle S-phase progression and create a favorable environment allowing efficient viral genome replication. Participates later in the secondary envelopment of capsids. Indeed, plays a linker role for the association of the outer viral tegument to the capsids together with the inner tegument protein.</text>
</comment>
<comment type="catalytic activity">
    <reaction evidence="1">
        <text>Thiol-dependent hydrolysis of ester, thioester, amide, peptide and isopeptide bonds formed by the C-terminal Gly of ubiquitin (a 76-residue protein attached to proteins as an intracellular targeting signal).</text>
        <dbReference type="EC" id="3.4.19.12"/>
    </reaction>
</comment>
<comment type="subunit">
    <text evidence="1">Interacts with host CUL1 and CUL4A; these interactions inhibit the E3 ligase activity of cullins. Interacts with inner tegument protein. Interacts with capsid vertex specific component CVC2. Interacts with the major capsid protein/MCP.</text>
</comment>
<comment type="subcellular location">
    <subcellularLocation>
        <location evidence="1">Virion tegument</location>
    </subcellularLocation>
    <subcellularLocation>
        <location evidence="1">Host cytoplasm</location>
    </subcellularLocation>
    <subcellularLocation>
        <location evidence="1">Host nucleus</location>
    </subcellularLocation>
    <text evidence="1">Tightly associated with the capsid.</text>
</comment>
<comment type="similarity">
    <text evidence="1">Belongs to the herpesviridae large tegument protein family.</text>
</comment>
<feature type="chain" id="PRO_0000416709" description="Large tegument protein deneddylase">
    <location>
        <begin position="1"/>
        <end position="2241"/>
    </location>
</feature>
<feature type="domain" description="Peptidase C76" evidence="1">
    <location>
        <begin position="4"/>
        <end position="226"/>
    </location>
</feature>
<feature type="region of interest" description="Deubiquitination activity" evidence="1">
    <location>
        <begin position="1"/>
        <end position="238"/>
    </location>
</feature>
<feature type="region of interest" description="Disordered" evidence="2">
    <location>
        <begin position="239"/>
        <end position="314"/>
    </location>
</feature>
<feature type="region of interest" description="Interaction with inner tegument protein" evidence="1">
    <location>
        <begin position="327"/>
        <end position="331"/>
    </location>
</feature>
<feature type="region of interest" description="Disordered" evidence="2">
    <location>
        <begin position="1187"/>
        <end position="1230"/>
    </location>
</feature>
<feature type="region of interest" description="Disordered" evidence="2">
    <location>
        <begin position="2118"/>
        <end position="2152"/>
    </location>
</feature>
<feature type="compositionally biased region" description="Low complexity" evidence="2">
    <location>
        <begin position="240"/>
        <end position="250"/>
    </location>
</feature>
<feature type="compositionally biased region" description="Pro residues" evidence="2">
    <location>
        <begin position="251"/>
        <end position="268"/>
    </location>
</feature>
<feature type="compositionally biased region" description="Low complexity" evidence="2">
    <location>
        <begin position="304"/>
        <end position="314"/>
    </location>
</feature>
<feature type="compositionally biased region" description="Basic and acidic residues" evidence="2">
    <location>
        <begin position="1190"/>
        <end position="1199"/>
    </location>
</feature>
<feature type="compositionally biased region" description="Basic and acidic residues" evidence="2">
    <location>
        <begin position="2142"/>
        <end position="2152"/>
    </location>
</feature>
<feature type="active site" evidence="1">
    <location>
        <position position="24"/>
    </location>
</feature>
<feature type="active site" evidence="1">
    <location>
        <position position="160"/>
    </location>
</feature>
<feature type="active site" evidence="1">
    <location>
        <position position="162"/>
    </location>
</feature>
<organism>
    <name type="scientific">Human cytomegalovirus (strain Merlin)</name>
    <name type="common">HHV-5</name>
    <name type="synonym">Human herpesvirus 5</name>
    <dbReference type="NCBI Taxonomy" id="295027"/>
    <lineage>
        <taxon>Viruses</taxon>
        <taxon>Duplodnaviria</taxon>
        <taxon>Heunggongvirae</taxon>
        <taxon>Peploviricota</taxon>
        <taxon>Herviviricetes</taxon>
        <taxon>Herpesvirales</taxon>
        <taxon>Orthoherpesviridae</taxon>
        <taxon>Betaherpesvirinae</taxon>
        <taxon>Cytomegalovirus</taxon>
        <taxon>Cytomegalovirus humanbeta5</taxon>
        <taxon>Human cytomegalovirus</taxon>
    </lineage>
</organism>
<name>LTP_HCMVM</name>
<accession>Q6SW84</accession>
<accession>D2K3L5</accession>
<protein>
    <recommendedName>
        <fullName evidence="1">Large tegument protein deneddylase</fullName>
        <ecNumber evidence="1">3.4.19.12</ecNumber>
        <ecNumber evidence="1">3.4.22.-</ecNumber>
    </recommendedName>
</protein>